<keyword id="KW-1185">Reference proteome</keyword>
<keyword id="KW-0687">Ribonucleoprotein</keyword>
<keyword id="KW-0689">Ribosomal protein</keyword>
<keyword id="KW-0694">RNA-binding</keyword>
<keyword id="KW-0699">rRNA-binding</keyword>
<keyword id="KW-0820">tRNA-binding</keyword>
<sequence length="121" mass="13570">MARIAGINIPPHQHAEIGLTAIYGIGRTTARKICEAAGIAYSKKIKELTDGDLEKIRDQLTSLTLEGDLRRETTMNIKRLMDIGCYRGFRHRRGLPMRGQRTRTNARTRKGPRKGAAALKK</sequence>
<reference key="1">
    <citation type="submission" date="2007-11" db="EMBL/GenBank/DDBJ databases">
        <title>Complete sequence of Delftia acidovorans DSM 14801 / SPH-1.</title>
        <authorList>
            <person name="Copeland A."/>
            <person name="Lucas S."/>
            <person name="Lapidus A."/>
            <person name="Barry K."/>
            <person name="Glavina del Rio T."/>
            <person name="Dalin E."/>
            <person name="Tice H."/>
            <person name="Pitluck S."/>
            <person name="Lowry S."/>
            <person name="Clum A."/>
            <person name="Schmutz J."/>
            <person name="Larimer F."/>
            <person name="Land M."/>
            <person name="Hauser L."/>
            <person name="Kyrpides N."/>
            <person name="Kim E."/>
            <person name="Schleheck D."/>
            <person name="Richardson P."/>
        </authorList>
    </citation>
    <scope>NUCLEOTIDE SEQUENCE [LARGE SCALE GENOMIC DNA]</scope>
    <source>
        <strain>DSM 14801 / SPH-1</strain>
    </source>
</reference>
<accession>A9BRX2</accession>
<name>RS13_DELAS</name>
<protein>
    <recommendedName>
        <fullName evidence="1">Small ribosomal subunit protein uS13</fullName>
    </recommendedName>
    <alternativeName>
        <fullName evidence="3">30S ribosomal protein S13</fullName>
    </alternativeName>
</protein>
<comment type="function">
    <text evidence="1">Located at the top of the head of the 30S subunit, it contacts several helices of the 16S rRNA. In the 70S ribosome it contacts the 23S rRNA (bridge B1a) and protein L5 of the 50S subunit (bridge B1b), connecting the 2 subunits; these bridges are implicated in subunit movement. Contacts the tRNAs in the A and P-sites.</text>
</comment>
<comment type="subunit">
    <text evidence="1">Part of the 30S ribosomal subunit. Forms a loose heterodimer with protein S19. Forms two bridges to the 50S subunit in the 70S ribosome.</text>
</comment>
<comment type="similarity">
    <text evidence="1">Belongs to the universal ribosomal protein uS13 family.</text>
</comment>
<evidence type="ECO:0000255" key="1">
    <source>
        <dbReference type="HAMAP-Rule" id="MF_01315"/>
    </source>
</evidence>
<evidence type="ECO:0000256" key="2">
    <source>
        <dbReference type="SAM" id="MobiDB-lite"/>
    </source>
</evidence>
<evidence type="ECO:0000305" key="3"/>
<organism>
    <name type="scientific">Delftia acidovorans (strain DSM 14801 / SPH-1)</name>
    <dbReference type="NCBI Taxonomy" id="398578"/>
    <lineage>
        <taxon>Bacteria</taxon>
        <taxon>Pseudomonadati</taxon>
        <taxon>Pseudomonadota</taxon>
        <taxon>Betaproteobacteria</taxon>
        <taxon>Burkholderiales</taxon>
        <taxon>Comamonadaceae</taxon>
        <taxon>Delftia</taxon>
    </lineage>
</organism>
<feature type="chain" id="PRO_1000141253" description="Small ribosomal subunit protein uS13">
    <location>
        <begin position="1"/>
        <end position="121"/>
    </location>
</feature>
<feature type="region of interest" description="Disordered" evidence="2">
    <location>
        <begin position="94"/>
        <end position="121"/>
    </location>
</feature>
<gene>
    <name evidence="1" type="primary">rpsM</name>
    <name type="ordered locus">Daci_1044</name>
</gene>
<proteinExistence type="inferred from homology"/>
<dbReference type="EMBL" id="CP000884">
    <property type="protein sequence ID" value="ABX33689.1"/>
    <property type="molecule type" value="Genomic_DNA"/>
</dbReference>
<dbReference type="RefSeq" id="WP_012202975.1">
    <property type="nucleotide sequence ID" value="NC_010002.1"/>
</dbReference>
<dbReference type="SMR" id="A9BRX2"/>
<dbReference type="STRING" id="398578.Daci_1044"/>
<dbReference type="GeneID" id="94695183"/>
<dbReference type="KEGG" id="dac:Daci_1044"/>
<dbReference type="eggNOG" id="COG0099">
    <property type="taxonomic scope" value="Bacteria"/>
</dbReference>
<dbReference type="HOGENOM" id="CLU_103849_1_2_4"/>
<dbReference type="Proteomes" id="UP000000784">
    <property type="component" value="Chromosome"/>
</dbReference>
<dbReference type="GO" id="GO:0005829">
    <property type="term" value="C:cytosol"/>
    <property type="evidence" value="ECO:0007669"/>
    <property type="project" value="TreeGrafter"/>
</dbReference>
<dbReference type="GO" id="GO:0015935">
    <property type="term" value="C:small ribosomal subunit"/>
    <property type="evidence" value="ECO:0007669"/>
    <property type="project" value="TreeGrafter"/>
</dbReference>
<dbReference type="GO" id="GO:0019843">
    <property type="term" value="F:rRNA binding"/>
    <property type="evidence" value="ECO:0007669"/>
    <property type="project" value="UniProtKB-UniRule"/>
</dbReference>
<dbReference type="GO" id="GO:0003735">
    <property type="term" value="F:structural constituent of ribosome"/>
    <property type="evidence" value="ECO:0007669"/>
    <property type="project" value="InterPro"/>
</dbReference>
<dbReference type="GO" id="GO:0000049">
    <property type="term" value="F:tRNA binding"/>
    <property type="evidence" value="ECO:0007669"/>
    <property type="project" value="UniProtKB-UniRule"/>
</dbReference>
<dbReference type="GO" id="GO:0006412">
    <property type="term" value="P:translation"/>
    <property type="evidence" value="ECO:0007669"/>
    <property type="project" value="UniProtKB-UniRule"/>
</dbReference>
<dbReference type="FunFam" id="1.10.8.50:FF:000001">
    <property type="entry name" value="30S ribosomal protein S13"/>
    <property type="match status" value="1"/>
</dbReference>
<dbReference type="FunFam" id="4.10.910.10:FF:000001">
    <property type="entry name" value="30S ribosomal protein S13"/>
    <property type="match status" value="1"/>
</dbReference>
<dbReference type="Gene3D" id="1.10.8.50">
    <property type="match status" value="1"/>
</dbReference>
<dbReference type="Gene3D" id="4.10.910.10">
    <property type="entry name" value="30s ribosomal protein s13, domain 2"/>
    <property type="match status" value="1"/>
</dbReference>
<dbReference type="HAMAP" id="MF_01315">
    <property type="entry name" value="Ribosomal_uS13"/>
    <property type="match status" value="1"/>
</dbReference>
<dbReference type="InterPro" id="IPR027437">
    <property type="entry name" value="Rbsml_uS13_C"/>
</dbReference>
<dbReference type="InterPro" id="IPR001892">
    <property type="entry name" value="Ribosomal_uS13"/>
</dbReference>
<dbReference type="InterPro" id="IPR010979">
    <property type="entry name" value="Ribosomal_uS13-like_H2TH"/>
</dbReference>
<dbReference type="InterPro" id="IPR019980">
    <property type="entry name" value="Ribosomal_uS13_bac-type"/>
</dbReference>
<dbReference type="InterPro" id="IPR018269">
    <property type="entry name" value="Ribosomal_uS13_CS"/>
</dbReference>
<dbReference type="NCBIfam" id="TIGR03631">
    <property type="entry name" value="uS13_bact"/>
    <property type="match status" value="1"/>
</dbReference>
<dbReference type="PANTHER" id="PTHR10871">
    <property type="entry name" value="30S RIBOSOMAL PROTEIN S13/40S RIBOSOMAL PROTEIN S18"/>
    <property type="match status" value="1"/>
</dbReference>
<dbReference type="PANTHER" id="PTHR10871:SF1">
    <property type="entry name" value="SMALL RIBOSOMAL SUBUNIT PROTEIN US13M"/>
    <property type="match status" value="1"/>
</dbReference>
<dbReference type="Pfam" id="PF00416">
    <property type="entry name" value="Ribosomal_S13"/>
    <property type="match status" value="1"/>
</dbReference>
<dbReference type="PIRSF" id="PIRSF002134">
    <property type="entry name" value="Ribosomal_S13"/>
    <property type="match status" value="1"/>
</dbReference>
<dbReference type="SUPFAM" id="SSF46946">
    <property type="entry name" value="S13-like H2TH domain"/>
    <property type="match status" value="1"/>
</dbReference>
<dbReference type="PROSITE" id="PS00646">
    <property type="entry name" value="RIBOSOMAL_S13_1"/>
    <property type="match status" value="1"/>
</dbReference>
<dbReference type="PROSITE" id="PS50159">
    <property type="entry name" value="RIBOSOMAL_S13_2"/>
    <property type="match status" value="1"/>
</dbReference>